<proteinExistence type="inferred from homology"/>
<reference key="1">
    <citation type="journal article" date="2009" name="PLoS Genet.">
        <title>Alliance of proteomics and genomics to unravel the specificities of Sahara bacterium Deinococcus deserti.</title>
        <authorList>
            <person name="de Groot A."/>
            <person name="Dulermo R."/>
            <person name="Ortet P."/>
            <person name="Blanchard L."/>
            <person name="Guerin P."/>
            <person name="Fernandez B."/>
            <person name="Vacherie B."/>
            <person name="Dossat C."/>
            <person name="Jolivet E."/>
            <person name="Siguier P."/>
            <person name="Chandler M."/>
            <person name="Barakat M."/>
            <person name="Dedieu A."/>
            <person name="Barbe V."/>
            <person name="Heulin T."/>
            <person name="Sommer S."/>
            <person name="Achouak W."/>
            <person name="Armengaud J."/>
        </authorList>
    </citation>
    <scope>NUCLEOTIDE SEQUENCE [LARGE SCALE GENOMIC DNA]</scope>
    <source>
        <strain>DSM 17065 / CIP 109153 / LMG 22923 / VCD115</strain>
    </source>
</reference>
<name>RS10_DEIDV</name>
<keyword id="KW-1185">Reference proteome</keyword>
<keyword id="KW-0687">Ribonucleoprotein</keyword>
<keyword id="KW-0689">Ribosomal protein</keyword>
<accession>C1CXG7</accession>
<dbReference type="EMBL" id="CP001114">
    <property type="protein sequence ID" value="ACO46884.1"/>
    <property type="molecule type" value="Genomic_DNA"/>
</dbReference>
<dbReference type="RefSeq" id="WP_012694006.1">
    <property type="nucleotide sequence ID" value="NC_012526.1"/>
</dbReference>
<dbReference type="SMR" id="C1CXG7"/>
<dbReference type="STRING" id="546414.Deide_18960"/>
<dbReference type="PaxDb" id="546414-Deide_18960"/>
<dbReference type="KEGG" id="ddr:Deide_18960"/>
<dbReference type="eggNOG" id="COG0051">
    <property type="taxonomic scope" value="Bacteria"/>
</dbReference>
<dbReference type="HOGENOM" id="CLU_122625_1_3_0"/>
<dbReference type="OrthoDB" id="9804464at2"/>
<dbReference type="Proteomes" id="UP000002208">
    <property type="component" value="Chromosome"/>
</dbReference>
<dbReference type="GO" id="GO:1990904">
    <property type="term" value="C:ribonucleoprotein complex"/>
    <property type="evidence" value="ECO:0007669"/>
    <property type="project" value="UniProtKB-KW"/>
</dbReference>
<dbReference type="GO" id="GO:0005840">
    <property type="term" value="C:ribosome"/>
    <property type="evidence" value="ECO:0007669"/>
    <property type="project" value="UniProtKB-KW"/>
</dbReference>
<dbReference type="GO" id="GO:0003735">
    <property type="term" value="F:structural constituent of ribosome"/>
    <property type="evidence" value="ECO:0007669"/>
    <property type="project" value="InterPro"/>
</dbReference>
<dbReference type="GO" id="GO:0000049">
    <property type="term" value="F:tRNA binding"/>
    <property type="evidence" value="ECO:0007669"/>
    <property type="project" value="UniProtKB-UniRule"/>
</dbReference>
<dbReference type="GO" id="GO:0006412">
    <property type="term" value="P:translation"/>
    <property type="evidence" value="ECO:0007669"/>
    <property type="project" value="UniProtKB-UniRule"/>
</dbReference>
<dbReference type="FunFam" id="3.30.70.600:FF:000009">
    <property type="entry name" value="30S ribosomal protein S10"/>
    <property type="match status" value="1"/>
</dbReference>
<dbReference type="Gene3D" id="3.30.70.600">
    <property type="entry name" value="Ribosomal protein S10 domain"/>
    <property type="match status" value="1"/>
</dbReference>
<dbReference type="HAMAP" id="MF_00508">
    <property type="entry name" value="Ribosomal_uS10"/>
    <property type="match status" value="1"/>
</dbReference>
<dbReference type="InterPro" id="IPR001848">
    <property type="entry name" value="Ribosomal_uS10"/>
</dbReference>
<dbReference type="InterPro" id="IPR018268">
    <property type="entry name" value="Ribosomal_uS10_CS"/>
</dbReference>
<dbReference type="InterPro" id="IPR027486">
    <property type="entry name" value="Ribosomal_uS10_dom"/>
</dbReference>
<dbReference type="InterPro" id="IPR036838">
    <property type="entry name" value="Ribosomal_uS10_dom_sf"/>
</dbReference>
<dbReference type="NCBIfam" id="NF001861">
    <property type="entry name" value="PRK00596.1"/>
    <property type="match status" value="1"/>
</dbReference>
<dbReference type="NCBIfam" id="TIGR01049">
    <property type="entry name" value="rpsJ_bact"/>
    <property type="match status" value="1"/>
</dbReference>
<dbReference type="PANTHER" id="PTHR11700">
    <property type="entry name" value="30S RIBOSOMAL PROTEIN S10 FAMILY MEMBER"/>
    <property type="match status" value="1"/>
</dbReference>
<dbReference type="Pfam" id="PF00338">
    <property type="entry name" value="Ribosomal_S10"/>
    <property type="match status" value="1"/>
</dbReference>
<dbReference type="PRINTS" id="PR00971">
    <property type="entry name" value="RIBOSOMALS10"/>
</dbReference>
<dbReference type="SMART" id="SM01403">
    <property type="entry name" value="Ribosomal_S10"/>
    <property type="match status" value="1"/>
</dbReference>
<dbReference type="SUPFAM" id="SSF54999">
    <property type="entry name" value="Ribosomal protein S10"/>
    <property type="match status" value="1"/>
</dbReference>
<dbReference type="PROSITE" id="PS00361">
    <property type="entry name" value="RIBOSOMAL_S10"/>
    <property type="match status" value="1"/>
</dbReference>
<sequence>MVAPKIRIKLRGFDHKALDQSASKIVDTVRRTGADVSGPVPLPTRIRRFCVLRSPFKYKDAREHFEIRTHNRLVDIMNPTKKTIDSLMTLDLPTGVDIEIKTVGGRA</sequence>
<protein>
    <recommendedName>
        <fullName evidence="1">Small ribosomal subunit protein uS10</fullName>
    </recommendedName>
    <alternativeName>
        <fullName evidence="2">30S ribosomal protein S10</fullName>
    </alternativeName>
</protein>
<gene>
    <name evidence="1" type="primary">rpsJ</name>
    <name type="ordered locus">Deide_18960</name>
</gene>
<comment type="function">
    <text evidence="1">Involved in the binding of tRNA to the ribosomes.</text>
</comment>
<comment type="subunit">
    <text evidence="1">Part of the 30S ribosomal subunit.</text>
</comment>
<comment type="similarity">
    <text evidence="1">Belongs to the universal ribosomal protein uS10 family.</text>
</comment>
<evidence type="ECO:0000255" key="1">
    <source>
        <dbReference type="HAMAP-Rule" id="MF_00508"/>
    </source>
</evidence>
<evidence type="ECO:0000305" key="2"/>
<organism>
    <name type="scientific">Deinococcus deserti (strain DSM 17065 / CIP 109153 / LMG 22923 / VCD115)</name>
    <dbReference type="NCBI Taxonomy" id="546414"/>
    <lineage>
        <taxon>Bacteria</taxon>
        <taxon>Thermotogati</taxon>
        <taxon>Deinococcota</taxon>
        <taxon>Deinococci</taxon>
        <taxon>Deinococcales</taxon>
        <taxon>Deinococcaceae</taxon>
        <taxon>Deinococcus</taxon>
    </lineage>
</organism>
<feature type="chain" id="PRO_1000206578" description="Small ribosomal subunit protein uS10">
    <location>
        <begin position="1"/>
        <end position="107"/>
    </location>
</feature>